<proteinExistence type="evidence at transcript level"/>
<comment type="function">
    <text>Guanine nucleotide-binding proteins (G proteins) are involved as modulators or transducers in various transmembrane signaling systems.</text>
</comment>
<comment type="subunit">
    <text>G proteins are composed of 3 units; alpha, beta and gamma. The alpha chain contains the guanine nucleotide binding site.</text>
</comment>
<comment type="similarity">
    <text evidence="5">Belongs to the G-alpha family.</text>
</comment>
<sequence>MGAGATGLRGARLSPEERANSSKSRAIDRALSKDHTDDLNRFKILLLGTAESGKSTIFKQMRVLHLDGYAKEDALEYLSIIHSNCMEALTQLVDACTAFGINHDITVQEDVNRFEDFKRKLRDPEGLVIPVVIGRCMDRVWHSPSLQLCYDTRRFRFALLDSAKYFMDNIVRLTEDNYVPSIQDIVHCRISTTGINELAFNYKKMDFKMVDVGGQRSERRKWIHCFDNVDMILFIVSMSDYDQLDPEDNKYNRMKQSYEIFKTIVHSDLFRHASIVLFLNKYDVFVEKLKTSPLRRSFKNYEGDNSEESAREFIKKLFRRCITDRHKFFVFETTATDTGNIDLVFGSAVAHIVNENLRSAGLHE</sequence>
<dbReference type="EMBL" id="AY008129">
    <property type="protein sequence ID" value="AAG32082.1"/>
    <property type="molecule type" value="mRNA"/>
</dbReference>
<dbReference type="EMBL" id="Z80789">
    <property type="protein sequence ID" value="CAB02553.1"/>
    <property type="molecule type" value="Genomic_DNA"/>
</dbReference>
<dbReference type="PIR" id="T22379">
    <property type="entry name" value="T22379"/>
</dbReference>
<dbReference type="RefSeq" id="NP_510189.1">
    <property type="nucleotide sequence ID" value="NM_077788.2"/>
</dbReference>
<dbReference type="SMR" id="Q93743"/>
<dbReference type="BioGRID" id="46345">
    <property type="interactions" value="1"/>
</dbReference>
<dbReference type="FunCoup" id="Q93743">
    <property type="interactions" value="3"/>
</dbReference>
<dbReference type="IntAct" id="Q93743">
    <property type="interactions" value="1"/>
</dbReference>
<dbReference type="STRING" id="6239.F48C11.1.1"/>
<dbReference type="PaxDb" id="6239-F48C11.1"/>
<dbReference type="EnsemblMetazoa" id="F48C11.1.1">
    <property type="protein sequence ID" value="F48C11.1.1"/>
    <property type="gene ID" value="WBGene00001668"/>
</dbReference>
<dbReference type="GeneID" id="181442"/>
<dbReference type="KEGG" id="cel:CELE_F48C11.1"/>
<dbReference type="UCSC" id="F48C11.1">
    <property type="organism name" value="c. elegans"/>
</dbReference>
<dbReference type="AGR" id="WB:WBGene00001668"/>
<dbReference type="CTD" id="181442"/>
<dbReference type="WormBase" id="F48C11.1">
    <property type="protein sequence ID" value="CE20829"/>
    <property type="gene ID" value="WBGene00001668"/>
    <property type="gene designation" value="gpa-6"/>
</dbReference>
<dbReference type="eggNOG" id="KOG0082">
    <property type="taxonomic scope" value="Eukaryota"/>
</dbReference>
<dbReference type="GeneTree" id="ENSGT00970000196059"/>
<dbReference type="HOGENOM" id="CLU_014184_6_0_1"/>
<dbReference type="InParanoid" id="Q93743"/>
<dbReference type="OMA" id="CETYRIV"/>
<dbReference type="OrthoDB" id="5817230at2759"/>
<dbReference type="PhylomeDB" id="Q93743"/>
<dbReference type="Reactome" id="R-CEL-170670">
    <property type="pathway name" value="Adenylate cyclase inhibitory pathway"/>
</dbReference>
<dbReference type="Reactome" id="R-CEL-392170">
    <property type="pathway name" value="ADP signalling through P2Y purinoceptor 12"/>
</dbReference>
<dbReference type="Reactome" id="R-CEL-418594">
    <property type="pathway name" value="G alpha (i) signalling events"/>
</dbReference>
<dbReference type="PRO" id="PR:Q93743"/>
<dbReference type="Proteomes" id="UP000001940">
    <property type="component" value="Chromosome X"/>
</dbReference>
<dbReference type="GO" id="GO:0030424">
    <property type="term" value="C:axon"/>
    <property type="evidence" value="ECO:0000314"/>
    <property type="project" value="WormBase"/>
</dbReference>
<dbReference type="GO" id="GO:0005737">
    <property type="term" value="C:cytoplasm"/>
    <property type="evidence" value="ECO:0000318"/>
    <property type="project" value="GO_Central"/>
</dbReference>
<dbReference type="GO" id="GO:0005834">
    <property type="term" value="C:heterotrimeric G-protein complex"/>
    <property type="evidence" value="ECO:0000318"/>
    <property type="project" value="GO_Central"/>
</dbReference>
<dbReference type="GO" id="GO:0043025">
    <property type="term" value="C:neuronal cell body"/>
    <property type="evidence" value="ECO:0000314"/>
    <property type="project" value="WormBase"/>
</dbReference>
<dbReference type="GO" id="GO:0001664">
    <property type="term" value="F:G protein-coupled receptor binding"/>
    <property type="evidence" value="ECO:0000318"/>
    <property type="project" value="GO_Central"/>
</dbReference>
<dbReference type="GO" id="GO:0031683">
    <property type="term" value="F:G-protein beta/gamma-subunit complex binding"/>
    <property type="evidence" value="ECO:0000318"/>
    <property type="project" value="GO_Central"/>
</dbReference>
<dbReference type="GO" id="GO:0005525">
    <property type="term" value="F:GTP binding"/>
    <property type="evidence" value="ECO:0007669"/>
    <property type="project" value="UniProtKB-KW"/>
</dbReference>
<dbReference type="GO" id="GO:0003924">
    <property type="term" value="F:GTPase activity"/>
    <property type="evidence" value="ECO:0000318"/>
    <property type="project" value="GO_Central"/>
</dbReference>
<dbReference type="GO" id="GO:0046872">
    <property type="term" value="F:metal ion binding"/>
    <property type="evidence" value="ECO:0007669"/>
    <property type="project" value="UniProtKB-KW"/>
</dbReference>
<dbReference type="GO" id="GO:0007188">
    <property type="term" value="P:adenylate cyclase-modulating G protein-coupled receptor signaling pathway"/>
    <property type="evidence" value="ECO:0000318"/>
    <property type="project" value="GO_Central"/>
</dbReference>
<dbReference type="CDD" id="cd00066">
    <property type="entry name" value="G-alpha"/>
    <property type="match status" value="1"/>
</dbReference>
<dbReference type="FunFam" id="1.10.400.10:FF:000023">
    <property type="entry name" value="Guanine nucleotide-binding protein alpha-6 subunit"/>
    <property type="match status" value="1"/>
</dbReference>
<dbReference type="FunFam" id="3.40.50.300:FF:000181">
    <property type="entry name" value="Guanine nucleotide-binding protein subunit alpha"/>
    <property type="match status" value="1"/>
</dbReference>
<dbReference type="Gene3D" id="1.10.400.10">
    <property type="entry name" value="GI Alpha 1, domain 2-like"/>
    <property type="match status" value="1"/>
</dbReference>
<dbReference type="Gene3D" id="3.40.50.300">
    <property type="entry name" value="P-loop containing nucleotide triphosphate hydrolases"/>
    <property type="match status" value="1"/>
</dbReference>
<dbReference type="InterPro" id="IPR001019">
    <property type="entry name" value="Gprotein_alpha_su"/>
</dbReference>
<dbReference type="InterPro" id="IPR011025">
    <property type="entry name" value="GproteinA_insert"/>
</dbReference>
<dbReference type="InterPro" id="IPR027417">
    <property type="entry name" value="P-loop_NTPase"/>
</dbReference>
<dbReference type="PANTHER" id="PTHR10218">
    <property type="entry name" value="GTP-BINDING PROTEIN ALPHA SUBUNIT"/>
    <property type="match status" value="1"/>
</dbReference>
<dbReference type="PANTHER" id="PTHR10218:SF247">
    <property type="entry name" value="GUANINE NUCLEOTIDE-BINDING PROTEIN ALPHA-6 SUBUNIT"/>
    <property type="match status" value="1"/>
</dbReference>
<dbReference type="Pfam" id="PF00503">
    <property type="entry name" value="G-alpha"/>
    <property type="match status" value="1"/>
</dbReference>
<dbReference type="PRINTS" id="PR00318">
    <property type="entry name" value="GPROTEINA"/>
</dbReference>
<dbReference type="SMART" id="SM00275">
    <property type="entry name" value="G_alpha"/>
    <property type="match status" value="1"/>
</dbReference>
<dbReference type="SUPFAM" id="SSF52540">
    <property type="entry name" value="P-loop containing nucleoside triphosphate hydrolases"/>
    <property type="match status" value="1"/>
</dbReference>
<dbReference type="SUPFAM" id="SSF47895">
    <property type="entry name" value="Transducin (alpha subunit), insertion domain"/>
    <property type="match status" value="1"/>
</dbReference>
<dbReference type="PROSITE" id="PS51882">
    <property type="entry name" value="G_ALPHA"/>
    <property type="match status" value="1"/>
</dbReference>
<reference key="1">
    <citation type="submission" date="2000-09" db="EMBL/GenBank/DDBJ databases">
        <title>Interaction analysis of the complete G-alpha subfamily of heterotrimeric G proteins from Caenorhabditis elegans.</title>
        <authorList>
            <person name="Cuppen E."/>
            <person name="Jansen G."/>
            <person name="Plasterk R.H.A."/>
        </authorList>
    </citation>
    <scope>NUCLEOTIDE SEQUENCE [MRNA]</scope>
    <source>
        <strain>Bristol N2</strain>
    </source>
</reference>
<reference key="2">
    <citation type="journal article" date="1998" name="Science">
        <title>Genome sequence of the nematode C. elegans: a platform for investigating biology.</title>
        <authorList>
            <consortium name="The C. elegans sequencing consortium"/>
        </authorList>
    </citation>
    <scope>NUCLEOTIDE SEQUENCE [LARGE SCALE GENOMIC DNA]</scope>
    <source>
        <strain>Bristol N2</strain>
    </source>
</reference>
<reference key="3">
    <citation type="journal article" date="1999" name="Nat. Genet.">
        <title>The complete family of genes encoding G proteins of Caenorhabditis elegans.</title>
        <authorList>
            <person name="Jansen G."/>
            <person name="Thijssen K.L."/>
            <person name="Werner P."/>
            <person name="van der Horst M."/>
            <person name="Hazendonk E."/>
            <person name="Plasterk R.H.A."/>
        </authorList>
    </citation>
    <scope>GENE FAMILY</scope>
    <scope>NOMENCLATURE</scope>
</reference>
<keyword id="KW-0342">GTP-binding</keyword>
<keyword id="KW-0449">Lipoprotein</keyword>
<keyword id="KW-0460">Magnesium</keyword>
<keyword id="KW-0479">Metal-binding</keyword>
<keyword id="KW-0519">Myristate</keyword>
<keyword id="KW-0547">Nucleotide-binding</keyword>
<keyword id="KW-1185">Reference proteome</keyword>
<keyword id="KW-0807">Transducer</keyword>
<protein>
    <recommendedName>
        <fullName>Guanine nucleotide-binding protein alpha-6 subunit</fullName>
    </recommendedName>
</protein>
<organism>
    <name type="scientific">Caenorhabditis elegans</name>
    <dbReference type="NCBI Taxonomy" id="6239"/>
    <lineage>
        <taxon>Eukaryota</taxon>
        <taxon>Metazoa</taxon>
        <taxon>Ecdysozoa</taxon>
        <taxon>Nematoda</taxon>
        <taxon>Chromadorea</taxon>
        <taxon>Rhabditida</taxon>
        <taxon>Rhabditina</taxon>
        <taxon>Rhabditomorpha</taxon>
        <taxon>Rhabditoidea</taxon>
        <taxon>Rhabditidae</taxon>
        <taxon>Peloderinae</taxon>
        <taxon>Caenorhabditis</taxon>
    </lineage>
</organism>
<feature type="initiator methionine" description="Removed" evidence="2">
    <location>
        <position position="1"/>
    </location>
</feature>
<feature type="chain" id="PRO_0000203639" description="Guanine nucleotide-binding protein alpha-6 subunit">
    <location>
        <begin position="2"/>
        <end position="364"/>
    </location>
</feature>
<feature type="domain" description="G-alpha" evidence="3">
    <location>
        <begin position="40"/>
        <end position="363"/>
    </location>
</feature>
<feature type="region of interest" description="Disordered" evidence="4">
    <location>
        <begin position="1"/>
        <end position="29"/>
    </location>
</feature>
<feature type="region of interest" description="G1 motif" evidence="3">
    <location>
        <begin position="43"/>
        <end position="56"/>
    </location>
</feature>
<feature type="region of interest" description="G2 motif" evidence="3">
    <location>
        <begin position="184"/>
        <end position="192"/>
    </location>
</feature>
<feature type="region of interest" description="G3 motif" evidence="3">
    <location>
        <begin position="207"/>
        <end position="216"/>
    </location>
</feature>
<feature type="region of interest" description="G4 motif" evidence="3">
    <location>
        <begin position="276"/>
        <end position="283"/>
    </location>
</feature>
<feature type="region of interest" description="G5 motif" evidence="3">
    <location>
        <begin position="333"/>
        <end position="338"/>
    </location>
</feature>
<feature type="compositionally biased region" description="Basic and acidic residues" evidence="4">
    <location>
        <begin position="14"/>
        <end position="29"/>
    </location>
</feature>
<feature type="binding site" evidence="1">
    <location>
        <begin position="48"/>
        <end position="55"/>
    </location>
    <ligand>
        <name>GTP</name>
        <dbReference type="ChEBI" id="CHEBI:37565"/>
    </ligand>
</feature>
<feature type="binding site" evidence="1">
    <location>
        <position position="55"/>
    </location>
    <ligand>
        <name>Mg(2+)</name>
        <dbReference type="ChEBI" id="CHEBI:18420"/>
    </ligand>
</feature>
<feature type="binding site" evidence="1">
    <location>
        <begin position="186"/>
        <end position="192"/>
    </location>
    <ligand>
        <name>GTP</name>
        <dbReference type="ChEBI" id="CHEBI:37565"/>
    </ligand>
</feature>
<feature type="binding site" evidence="1">
    <location>
        <position position="192"/>
    </location>
    <ligand>
        <name>Mg(2+)</name>
        <dbReference type="ChEBI" id="CHEBI:18420"/>
    </ligand>
</feature>
<feature type="binding site" evidence="1">
    <location>
        <begin position="211"/>
        <end position="215"/>
    </location>
    <ligand>
        <name>GTP</name>
        <dbReference type="ChEBI" id="CHEBI:37565"/>
    </ligand>
</feature>
<feature type="binding site" evidence="1">
    <location>
        <begin position="280"/>
        <end position="283"/>
    </location>
    <ligand>
        <name>GTP</name>
        <dbReference type="ChEBI" id="CHEBI:37565"/>
    </ligand>
</feature>
<feature type="binding site" evidence="1">
    <location>
        <position position="335"/>
    </location>
    <ligand>
        <name>GTP</name>
        <dbReference type="ChEBI" id="CHEBI:37565"/>
    </ligand>
</feature>
<feature type="lipid moiety-binding region" description="N-myristoyl glycine" evidence="2">
    <location>
        <position position="2"/>
    </location>
</feature>
<gene>
    <name type="primary">gpa-6</name>
    <name type="ORF">F48C11.1</name>
</gene>
<name>GPA6_CAEEL</name>
<accession>Q93743</accession>
<evidence type="ECO:0000250" key="1"/>
<evidence type="ECO:0000255" key="2"/>
<evidence type="ECO:0000255" key="3">
    <source>
        <dbReference type="PROSITE-ProRule" id="PRU01230"/>
    </source>
</evidence>
<evidence type="ECO:0000256" key="4">
    <source>
        <dbReference type="SAM" id="MobiDB-lite"/>
    </source>
</evidence>
<evidence type="ECO:0000305" key="5"/>